<evidence type="ECO:0000255" key="1">
    <source>
        <dbReference type="HAMAP-Rule" id="MF_00509"/>
    </source>
</evidence>
<evidence type="ECO:0000256" key="2">
    <source>
        <dbReference type="SAM" id="MobiDB-lite"/>
    </source>
</evidence>
<gene>
    <name evidence="1" type="primary">zipA</name>
    <name type="ordered locus">YPN_1392</name>
    <name type="ORF">YP516_1536</name>
</gene>
<dbReference type="EMBL" id="CP000305">
    <property type="protein sequence ID" value="ABG17722.1"/>
    <property type="molecule type" value="Genomic_DNA"/>
</dbReference>
<dbReference type="EMBL" id="ACNQ01000009">
    <property type="protein sequence ID" value="EEO76816.1"/>
    <property type="molecule type" value="Genomic_DNA"/>
</dbReference>
<dbReference type="RefSeq" id="WP_002227089.1">
    <property type="nucleotide sequence ID" value="NZ_ACNQ01000009.1"/>
</dbReference>
<dbReference type="SMR" id="Q1CJV8"/>
<dbReference type="GeneID" id="57975708"/>
<dbReference type="KEGG" id="ypn:YPN_1392"/>
<dbReference type="HOGENOM" id="CLU_030174_1_0_6"/>
<dbReference type="Proteomes" id="UP000008936">
    <property type="component" value="Chromosome"/>
</dbReference>
<dbReference type="GO" id="GO:0032153">
    <property type="term" value="C:cell division site"/>
    <property type="evidence" value="ECO:0007669"/>
    <property type="project" value="UniProtKB-UniRule"/>
</dbReference>
<dbReference type="GO" id="GO:0005886">
    <property type="term" value="C:plasma membrane"/>
    <property type="evidence" value="ECO:0007669"/>
    <property type="project" value="UniProtKB-SubCell"/>
</dbReference>
<dbReference type="GO" id="GO:0000917">
    <property type="term" value="P:division septum assembly"/>
    <property type="evidence" value="ECO:0007669"/>
    <property type="project" value="TreeGrafter"/>
</dbReference>
<dbReference type="GO" id="GO:0043093">
    <property type="term" value="P:FtsZ-dependent cytokinesis"/>
    <property type="evidence" value="ECO:0007669"/>
    <property type="project" value="UniProtKB-UniRule"/>
</dbReference>
<dbReference type="CDD" id="cd00231">
    <property type="entry name" value="ZipA"/>
    <property type="match status" value="1"/>
</dbReference>
<dbReference type="FunFam" id="3.30.1400.10:FF:000001">
    <property type="entry name" value="Cell division protein ZipA"/>
    <property type="match status" value="1"/>
</dbReference>
<dbReference type="Gene3D" id="3.30.1400.10">
    <property type="entry name" value="ZipA, C-terminal FtsZ-binding domain"/>
    <property type="match status" value="1"/>
</dbReference>
<dbReference type="HAMAP" id="MF_00509">
    <property type="entry name" value="ZipA"/>
    <property type="match status" value="1"/>
</dbReference>
<dbReference type="InterPro" id="IPR011919">
    <property type="entry name" value="Cell_div_ZipA"/>
</dbReference>
<dbReference type="InterPro" id="IPR007449">
    <property type="entry name" value="ZipA_FtsZ-bd_C"/>
</dbReference>
<dbReference type="InterPro" id="IPR036765">
    <property type="entry name" value="ZipA_FtsZ-bd_C_sf"/>
</dbReference>
<dbReference type="NCBIfam" id="TIGR02205">
    <property type="entry name" value="septum_zipA"/>
    <property type="match status" value="1"/>
</dbReference>
<dbReference type="PANTHER" id="PTHR38685">
    <property type="entry name" value="CELL DIVISION PROTEIN ZIPA"/>
    <property type="match status" value="1"/>
</dbReference>
<dbReference type="PANTHER" id="PTHR38685:SF1">
    <property type="entry name" value="CELL DIVISION PROTEIN ZIPA"/>
    <property type="match status" value="1"/>
</dbReference>
<dbReference type="Pfam" id="PF04354">
    <property type="entry name" value="ZipA_C"/>
    <property type="match status" value="1"/>
</dbReference>
<dbReference type="SMART" id="SM00771">
    <property type="entry name" value="ZipA_C"/>
    <property type="match status" value="1"/>
</dbReference>
<dbReference type="SUPFAM" id="SSF64383">
    <property type="entry name" value="Cell-division protein ZipA, C-terminal domain"/>
    <property type="match status" value="1"/>
</dbReference>
<protein>
    <recommendedName>
        <fullName evidence="1">Cell division protein ZipA</fullName>
    </recommendedName>
</protein>
<comment type="function">
    <text evidence="1">Essential cell division protein that stabilizes the FtsZ protofilaments by cross-linking them and that serves as a cytoplasmic membrane anchor for the Z ring. Also required for the recruitment to the septal ring of downstream cell division proteins.</text>
</comment>
<comment type="subunit">
    <text evidence="1">Interacts with FtsZ via their C-terminal domains.</text>
</comment>
<comment type="subcellular location">
    <subcellularLocation>
        <location evidence="1">Cell inner membrane</location>
        <topology evidence="1">Single-pass type I membrane protein</topology>
    </subcellularLocation>
    <text evidence="1">Localizes to the Z ring in an FtsZ-dependent manner.</text>
</comment>
<comment type="similarity">
    <text evidence="1">Belongs to the ZipA family.</text>
</comment>
<accession>Q1CJV8</accession>
<accession>C4GS06</accession>
<proteinExistence type="inferred from homology"/>
<keyword id="KW-0131">Cell cycle</keyword>
<keyword id="KW-0132">Cell division</keyword>
<keyword id="KW-0997">Cell inner membrane</keyword>
<keyword id="KW-1003">Cell membrane</keyword>
<keyword id="KW-0472">Membrane</keyword>
<keyword id="KW-0812">Transmembrane</keyword>
<keyword id="KW-1133">Transmembrane helix</keyword>
<feature type="chain" id="PRO_0000258591" description="Cell division protein ZipA">
    <location>
        <begin position="1"/>
        <end position="328"/>
    </location>
</feature>
<feature type="topological domain" description="Periplasmic" evidence="1">
    <location>
        <begin position="1"/>
        <end position="6"/>
    </location>
</feature>
<feature type="transmembrane region" description="Helical" evidence="1">
    <location>
        <begin position="7"/>
        <end position="27"/>
    </location>
</feature>
<feature type="topological domain" description="Cytoplasmic" evidence="1">
    <location>
        <begin position="28"/>
        <end position="328"/>
    </location>
</feature>
<feature type="region of interest" description="Disordered" evidence="2">
    <location>
        <begin position="61"/>
        <end position="183"/>
    </location>
</feature>
<feature type="compositionally biased region" description="Basic and acidic residues" evidence="2">
    <location>
        <begin position="61"/>
        <end position="72"/>
    </location>
</feature>
<feature type="compositionally biased region" description="Polar residues" evidence="2">
    <location>
        <begin position="95"/>
        <end position="104"/>
    </location>
</feature>
<feature type="compositionally biased region" description="Polar residues" evidence="2">
    <location>
        <begin position="164"/>
        <end position="174"/>
    </location>
</feature>
<name>ZIPA_YERPN</name>
<organism>
    <name type="scientific">Yersinia pestis bv. Antiqua (strain Nepal516)</name>
    <dbReference type="NCBI Taxonomy" id="377628"/>
    <lineage>
        <taxon>Bacteria</taxon>
        <taxon>Pseudomonadati</taxon>
        <taxon>Pseudomonadota</taxon>
        <taxon>Gammaproteobacteria</taxon>
        <taxon>Enterobacterales</taxon>
        <taxon>Yersiniaceae</taxon>
        <taxon>Yersinia</taxon>
    </lineage>
</organism>
<reference key="1">
    <citation type="journal article" date="2006" name="J. Bacteriol.">
        <title>Complete genome sequence of Yersinia pestis strains Antiqua and Nepal516: evidence of gene reduction in an emerging pathogen.</title>
        <authorList>
            <person name="Chain P.S.G."/>
            <person name="Hu P."/>
            <person name="Malfatti S.A."/>
            <person name="Radnedge L."/>
            <person name="Larimer F."/>
            <person name="Vergez L.M."/>
            <person name="Worsham P."/>
            <person name="Chu M.C."/>
            <person name="Andersen G.L."/>
        </authorList>
    </citation>
    <scope>NUCLEOTIDE SEQUENCE [LARGE SCALE GENOMIC DNA]</scope>
    <source>
        <strain>Nepal516</strain>
    </source>
</reference>
<reference key="2">
    <citation type="submission" date="2009-04" db="EMBL/GenBank/DDBJ databases">
        <title>Yersinia pestis Nepal516A whole genome shotgun sequencing project.</title>
        <authorList>
            <person name="Plunkett G. III"/>
            <person name="Anderson B.D."/>
            <person name="Baumler D.J."/>
            <person name="Burland V."/>
            <person name="Cabot E.L."/>
            <person name="Glasner J.D."/>
            <person name="Mau B."/>
            <person name="Neeno-Eckwall E."/>
            <person name="Perna N.T."/>
            <person name="Munk A.C."/>
            <person name="Tapia R."/>
            <person name="Green L.D."/>
            <person name="Rogers Y.C."/>
            <person name="Detter J.C."/>
            <person name="Bruce D.C."/>
            <person name="Brettin T.S."/>
        </authorList>
    </citation>
    <scope>NUCLEOTIDE SEQUENCE [LARGE SCALE GENOMIC DNA]</scope>
    <source>
        <strain>Nepal516</strain>
    </source>
</reference>
<sequence length="328" mass="36098">MMQDLRLILIVVGAIAIIALLLHGLWTSRKERSSLFRDRPVKRTKQERVETPIESLDEGVGEVRVRTSHPQEKPSFNHLDDDDDEVPVIQHAETKSAQVKTASRQAPFASVQTDYDDPLLGGLSAEQPPHDLSRDPLLGKADESYSQPQHAEPPHVEKPAHQVAPQQHVESQQEPVAPAPEAKPQKLKETVLVLHVAAHHGGVIGGEVLLQSVLQSGFQFGEMGIFHRHLSPAGSGPVLFSLANMVKPGSFDPDTMSDFSTPGVSMFMMVPSYGDANQNFKLMLQSAQRIADDVGGVVLDDERRMMTPQKLESYKARIREVLDANTIA</sequence>